<feature type="chain" id="PRO_1000137865" description="tRNA(Ile)-lysidine synthase">
    <location>
        <begin position="1"/>
        <end position="440"/>
    </location>
</feature>
<feature type="binding site" evidence="1">
    <location>
        <begin position="31"/>
        <end position="36"/>
    </location>
    <ligand>
        <name>ATP</name>
        <dbReference type="ChEBI" id="CHEBI:30616"/>
    </ligand>
</feature>
<keyword id="KW-0067">ATP-binding</keyword>
<keyword id="KW-0963">Cytoplasm</keyword>
<keyword id="KW-0436">Ligase</keyword>
<keyword id="KW-0547">Nucleotide-binding</keyword>
<keyword id="KW-0819">tRNA processing</keyword>
<gene>
    <name evidence="1" type="primary">tilS</name>
    <name type="ordered locus">BbuZS7_0818</name>
</gene>
<sequence length="440" mass="51472">MHFLDENIQIKIDKFYKKNSLDKNRVIVAFSGGADSTALLLNLKYYLSNNVIAFYFAHFIRSDNEQNQEIEHVKGFCDLYNIALQIKKCDIDIKSESARLGVSIEELARKFRYIALENALKENGANYIALAHNENDQIETIIMRFFQGSFLDGLSGIPSVNRNIIRPLLEVSRLEIENFLSLNNIGFFVDSTNAQNLYLRNRVRNNLLPAIKKVFKGYEKCLKRISEFSKEFADYFGKDEFFPVEKGKYYYSFDLKTFLDFPKYLVFRLIFKILNSEGIAAKVSYKALNEAFKVEINRKKNNVLLKTNDFFLEKRHNKINLIFKRDEKFYKPFDFILEVGKWHSLSLGKILLKYLECNAASVSRLKCCSYEFRYKFFKDRLKAKKFFSKFIRCNPAYLMLLALDNRLIGIIDLNTLNLVWSEKSILKKINISLIGGLLKE</sequence>
<accession>B7J0N4</accession>
<reference key="1">
    <citation type="journal article" date="2011" name="J. Bacteriol.">
        <title>Whole-genome sequences of thirteen isolates of Borrelia burgdorferi.</title>
        <authorList>
            <person name="Schutzer S.E."/>
            <person name="Fraser-Liggett C.M."/>
            <person name="Casjens S.R."/>
            <person name="Qiu W.G."/>
            <person name="Dunn J.J."/>
            <person name="Mongodin E.F."/>
            <person name="Luft B.J."/>
        </authorList>
    </citation>
    <scope>NUCLEOTIDE SEQUENCE [LARGE SCALE GENOMIC DNA]</scope>
    <source>
        <strain>ZS7</strain>
    </source>
</reference>
<proteinExistence type="inferred from homology"/>
<organism>
    <name type="scientific">Borreliella burgdorferi (strain ZS7)</name>
    <name type="common">Borrelia burgdorferi</name>
    <dbReference type="NCBI Taxonomy" id="445985"/>
    <lineage>
        <taxon>Bacteria</taxon>
        <taxon>Pseudomonadati</taxon>
        <taxon>Spirochaetota</taxon>
        <taxon>Spirochaetia</taxon>
        <taxon>Spirochaetales</taxon>
        <taxon>Borreliaceae</taxon>
        <taxon>Borreliella</taxon>
    </lineage>
</organism>
<comment type="function">
    <text evidence="1">Ligates lysine onto the cytidine present at position 34 of the AUA codon-specific tRNA(Ile) that contains the anticodon CAU, in an ATP-dependent manner. Cytidine is converted to lysidine, thus changing the amino acid specificity of the tRNA from methionine to isoleucine.</text>
</comment>
<comment type="catalytic activity">
    <reaction evidence="1">
        <text>cytidine(34) in tRNA(Ile2) + L-lysine + ATP = lysidine(34) in tRNA(Ile2) + AMP + diphosphate + H(+)</text>
        <dbReference type="Rhea" id="RHEA:43744"/>
        <dbReference type="Rhea" id="RHEA-COMP:10625"/>
        <dbReference type="Rhea" id="RHEA-COMP:10670"/>
        <dbReference type="ChEBI" id="CHEBI:15378"/>
        <dbReference type="ChEBI" id="CHEBI:30616"/>
        <dbReference type="ChEBI" id="CHEBI:32551"/>
        <dbReference type="ChEBI" id="CHEBI:33019"/>
        <dbReference type="ChEBI" id="CHEBI:82748"/>
        <dbReference type="ChEBI" id="CHEBI:83665"/>
        <dbReference type="ChEBI" id="CHEBI:456215"/>
        <dbReference type="EC" id="6.3.4.19"/>
    </reaction>
</comment>
<comment type="subcellular location">
    <subcellularLocation>
        <location evidence="1">Cytoplasm</location>
    </subcellularLocation>
</comment>
<comment type="domain">
    <text>The N-terminal region contains the highly conserved SGGXDS motif, predicted to be a P-loop motif involved in ATP binding.</text>
</comment>
<comment type="similarity">
    <text evidence="1">Belongs to the tRNA(Ile)-lysidine synthase family.</text>
</comment>
<name>TILS_BORBZ</name>
<dbReference type="EC" id="6.3.4.19" evidence="1"/>
<dbReference type="EMBL" id="CP001205">
    <property type="protein sequence ID" value="ACK74686.1"/>
    <property type="molecule type" value="Genomic_DNA"/>
</dbReference>
<dbReference type="RefSeq" id="WP_002657033.1">
    <property type="nucleotide sequence ID" value="NC_011728.1"/>
</dbReference>
<dbReference type="SMR" id="B7J0N4"/>
<dbReference type="GeneID" id="56567367"/>
<dbReference type="KEGG" id="bbz:BbuZS7_0818"/>
<dbReference type="HOGENOM" id="CLU_050646_0_0_12"/>
<dbReference type="Proteomes" id="UP000006901">
    <property type="component" value="Chromosome"/>
</dbReference>
<dbReference type="GO" id="GO:0005737">
    <property type="term" value="C:cytoplasm"/>
    <property type="evidence" value="ECO:0007669"/>
    <property type="project" value="UniProtKB-SubCell"/>
</dbReference>
<dbReference type="GO" id="GO:0005524">
    <property type="term" value="F:ATP binding"/>
    <property type="evidence" value="ECO:0007669"/>
    <property type="project" value="UniProtKB-UniRule"/>
</dbReference>
<dbReference type="GO" id="GO:0032267">
    <property type="term" value="F:tRNA(Ile)-lysidine synthase activity"/>
    <property type="evidence" value="ECO:0007669"/>
    <property type="project" value="UniProtKB-EC"/>
</dbReference>
<dbReference type="GO" id="GO:0006400">
    <property type="term" value="P:tRNA modification"/>
    <property type="evidence" value="ECO:0007669"/>
    <property type="project" value="UniProtKB-UniRule"/>
</dbReference>
<dbReference type="CDD" id="cd01992">
    <property type="entry name" value="TilS_N"/>
    <property type="match status" value="1"/>
</dbReference>
<dbReference type="Gene3D" id="3.40.50.620">
    <property type="entry name" value="HUPs"/>
    <property type="match status" value="1"/>
</dbReference>
<dbReference type="HAMAP" id="MF_01161">
    <property type="entry name" value="tRNA_Ile_lys_synt"/>
    <property type="match status" value="1"/>
</dbReference>
<dbReference type="InterPro" id="IPR014729">
    <property type="entry name" value="Rossmann-like_a/b/a_fold"/>
</dbReference>
<dbReference type="InterPro" id="IPR011063">
    <property type="entry name" value="TilS/TtcA_N"/>
</dbReference>
<dbReference type="InterPro" id="IPR012094">
    <property type="entry name" value="tRNA_Ile_lys_synt"/>
</dbReference>
<dbReference type="InterPro" id="IPR012795">
    <property type="entry name" value="tRNA_Ile_lys_synt_N"/>
</dbReference>
<dbReference type="NCBIfam" id="TIGR02432">
    <property type="entry name" value="lysidine_TilS_N"/>
    <property type="match status" value="1"/>
</dbReference>
<dbReference type="PANTHER" id="PTHR43033">
    <property type="entry name" value="TRNA(ILE)-LYSIDINE SYNTHASE-RELATED"/>
    <property type="match status" value="1"/>
</dbReference>
<dbReference type="PANTHER" id="PTHR43033:SF1">
    <property type="entry name" value="TRNA(ILE)-LYSIDINE SYNTHASE-RELATED"/>
    <property type="match status" value="1"/>
</dbReference>
<dbReference type="Pfam" id="PF01171">
    <property type="entry name" value="ATP_bind_3"/>
    <property type="match status" value="1"/>
</dbReference>
<dbReference type="SUPFAM" id="SSF52402">
    <property type="entry name" value="Adenine nucleotide alpha hydrolases-like"/>
    <property type="match status" value="1"/>
</dbReference>
<evidence type="ECO:0000255" key="1">
    <source>
        <dbReference type="HAMAP-Rule" id="MF_01161"/>
    </source>
</evidence>
<protein>
    <recommendedName>
        <fullName evidence="1">tRNA(Ile)-lysidine synthase</fullName>
        <ecNumber evidence="1">6.3.4.19</ecNumber>
    </recommendedName>
    <alternativeName>
        <fullName evidence="1">tRNA(Ile)-2-lysyl-cytidine synthase</fullName>
    </alternativeName>
    <alternativeName>
        <fullName evidence="1">tRNA(Ile)-lysidine synthetase</fullName>
    </alternativeName>
</protein>